<comment type="function">
    <text evidence="1">A key translational regulator that binds mRNA to regulate translation initiation and/or mRNA stability. Mediates global changes in gene expression, shifting from rapid growth to stress survival by linking envelope stress, the stringent response and the catabolite repression systems. Usually binds in the 5'-UTR; binding at or near the Shine-Dalgarno sequence prevents ribosome-binding, repressing translation, binding elsewhere in the 5'-UTR can activate translation and/or stabilize the mRNA. Its function is antagonized by small RNA(s).</text>
</comment>
<comment type="subunit">
    <text evidence="1">Homodimer; the beta-strands of each monomer intercalate to form a hydrophobic core, while the alpha-helices form wings that extend away from the core.</text>
</comment>
<comment type="subcellular location">
    <subcellularLocation>
        <location evidence="1">Cytoplasm</location>
    </subcellularLocation>
</comment>
<comment type="similarity">
    <text evidence="1">Belongs to the CsrA/RsmA family.</text>
</comment>
<organism>
    <name type="scientific">Citrobacter koseri (strain ATCC BAA-895 / CDC 4225-83 / SGSC4696)</name>
    <dbReference type="NCBI Taxonomy" id="290338"/>
    <lineage>
        <taxon>Bacteria</taxon>
        <taxon>Pseudomonadati</taxon>
        <taxon>Pseudomonadota</taxon>
        <taxon>Gammaproteobacteria</taxon>
        <taxon>Enterobacterales</taxon>
        <taxon>Enterobacteriaceae</taxon>
        <taxon>Citrobacter</taxon>
    </lineage>
</organism>
<protein>
    <recommendedName>
        <fullName evidence="1">Translational regulator CsrA</fullName>
    </recommendedName>
    <alternativeName>
        <fullName evidence="1">Carbon storage regulator</fullName>
    </alternativeName>
</protein>
<reference key="1">
    <citation type="submission" date="2007-08" db="EMBL/GenBank/DDBJ databases">
        <authorList>
            <consortium name="The Citrobacter koseri Genome Sequencing Project"/>
            <person name="McClelland M."/>
            <person name="Sanderson E.K."/>
            <person name="Porwollik S."/>
            <person name="Spieth J."/>
            <person name="Clifton W.S."/>
            <person name="Latreille P."/>
            <person name="Courtney L."/>
            <person name="Wang C."/>
            <person name="Pepin K."/>
            <person name="Bhonagiri V."/>
            <person name="Nash W."/>
            <person name="Johnson M."/>
            <person name="Thiruvilangam P."/>
            <person name="Wilson R."/>
        </authorList>
    </citation>
    <scope>NUCLEOTIDE SEQUENCE [LARGE SCALE GENOMIC DNA]</scope>
    <source>
        <strain>ATCC BAA-895 / CDC 4225-83 / SGSC4696</strain>
    </source>
</reference>
<sequence length="61" mass="6856">MLILTRRVGETLMIGDEVTVTVLGVKGNQVRIGVNAPKEVSVHREEIYQRIQAEKSQQSSY</sequence>
<keyword id="KW-0010">Activator</keyword>
<keyword id="KW-0963">Cytoplasm</keyword>
<keyword id="KW-1185">Reference proteome</keyword>
<keyword id="KW-0678">Repressor</keyword>
<keyword id="KW-0694">RNA-binding</keyword>
<keyword id="KW-0810">Translation regulation</keyword>
<name>CSRA_CITK8</name>
<evidence type="ECO:0000255" key="1">
    <source>
        <dbReference type="HAMAP-Rule" id="MF_00167"/>
    </source>
</evidence>
<accession>A8ANQ0</accession>
<gene>
    <name evidence="1" type="primary">csrA</name>
    <name type="ordered locus">CKO_04047</name>
</gene>
<feature type="chain" id="PRO_1000023368" description="Translational regulator CsrA">
    <location>
        <begin position="1"/>
        <end position="61"/>
    </location>
</feature>
<proteinExistence type="inferred from homology"/>
<dbReference type="EMBL" id="CP000822">
    <property type="protein sequence ID" value="ABV15113.1"/>
    <property type="molecule type" value="Genomic_DNA"/>
</dbReference>
<dbReference type="RefSeq" id="WP_000906486.1">
    <property type="nucleotide sequence ID" value="NC_009792.1"/>
</dbReference>
<dbReference type="SMR" id="A8ANQ0"/>
<dbReference type="STRING" id="290338.CKO_04047"/>
<dbReference type="GeneID" id="98389839"/>
<dbReference type="KEGG" id="cko:CKO_04047"/>
<dbReference type="HOGENOM" id="CLU_164837_2_1_6"/>
<dbReference type="OrthoDB" id="9809061at2"/>
<dbReference type="Proteomes" id="UP000008148">
    <property type="component" value="Chromosome"/>
</dbReference>
<dbReference type="GO" id="GO:0005829">
    <property type="term" value="C:cytosol"/>
    <property type="evidence" value="ECO:0007669"/>
    <property type="project" value="TreeGrafter"/>
</dbReference>
<dbReference type="GO" id="GO:0048027">
    <property type="term" value="F:mRNA 5'-UTR binding"/>
    <property type="evidence" value="ECO:0007669"/>
    <property type="project" value="UniProtKB-UniRule"/>
</dbReference>
<dbReference type="GO" id="GO:0006402">
    <property type="term" value="P:mRNA catabolic process"/>
    <property type="evidence" value="ECO:0007669"/>
    <property type="project" value="InterPro"/>
</dbReference>
<dbReference type="GO" id="GO:0045947">
    <property type="term" value="P:negative regulation of translational initiation"/>
    <property type="evidence" value="ECO:0007669"/>
    <property type="project" value="UniProtKB-UniRule"/>
</dbReference>
<dbReference type="GO" id="GO:0045948">
    <property type="term" value="P:positive regulation of translational initiation"/>
    <property type="evidence" value="ECO:0007669"/>
    <property type="project" value="UniProtKB-UniRule"/>
</dbReference>
<dbReference type="GO" id="GO:0006109">
    <property type="term" value="P:regulation of carbohydrate metabolic process"/>
    <property type="evidence" value="ECO:0007669"/>
    <property type="project" value="UniProtKB-UniRule"/>
</dbReference>
<dbReference type="FunFam" id="2.60.40.4380:FF:000001">
    <property type="entry name" value="Translational regulator CsrA"/>
    <property type="match status" value="1"/>
</dbReference>
<dbReference type="Gene3D" id="2.60.40.4380">
    <property type="entry name" value="Translational regulator CsrA"/>
    <property type="match status" value="1"/>
</dbReference>
<dbReference type="HAMAP" id="MF_00167">
    <property type="entry name" value="CsrA"/>
    <property type="match status" value="1"/>
</dbReference>
<dbReference type="InterPro" id="IPR003751">
    <property type="entry name" value="CsrA"/>
</dbReference>
<dbReference type="InterPro" id="IPR036107">
    <property type="entry name" value="CsrA_sf"/>
</dbReference>
<dbReference type="NCBIfam" id="TIGR00202">
    <property type="entry name" value="csrA"/>
    <property type="match status" value="1"/>
</dbReference>
<dbReference type="NCBIfam" id="NF002469">
    <property type="entry name" value="PRK01712.1"/>
    <property type="match status" value="1"/>
</dbReference>
<dbReference type="PANTHER" id="PTHR34984">
    <property type="entry name" value="CARBON STORAGE REGULATOR"/>
    <property type="match status" value="1"/>
</dbReference>
<dbReference type="PANTHER" id="PTHR34984:SF1">
    <property type="entry name" value="CARBON STORAGE REGULATOR"/>
    <property type="match status" value="1"/>
</dbReference>
<dbReference type="Pfam" id="PF02599">
    <property type="entry name" value="CsrA"/>
    <property type="match status" value="1"/>
</dbReference>
<dbReference type="SUPFAM" id="SSF117130">
    <property type="entry name" value="CsrA-like"/>
    <property type="match status" value="1"/>
</dbReference>